<reference key="1">
    <citation type="journal article" date="2008" name="Proc. Natl. Acad. Sci. U.S.A.">
        <title>Nitrogen fixation island and rhizosphere competence traits in the genome of root-associated Pseudomonas stutzeri A1501.</title>
        <authorList>
            <person name="Yan Y."/>
            <person name="Yang J."/>
            <person name="Dou Y."/>
            <person name="Chen M."/>
            <person name="Ping S."/>
            <person name="Peng J."/>
            <person name="Lu W."/>
            <person name="Zhang W."/>
            <person name="Yao Z."/>
            <person name="Li H."/>
            <person name="Liu W."/>
            <person name="He S."/>
            <person name="Geng L."/>
            <person name="Zhang X."/>
            <person name="Yang F."/>
            <person name="Yu H."/>
            <person name="Zhan Y."/>
            <person name="Li D."/>
            <person name="Lin Z."/>
            <person name="Wang Y."/>
            <person name="Elmerich C."/>
            <person name="Lin M."/>
            <person name="Jin Q."/>
        </authorList>
    </citation>
    <scope>NUCLEOTIDE SEQUENCE [LARGE SCALE GENOMIC DNA]</scope>
    <source>
        <strain>A1501</strain>
    </source>
</reference>
<protein>
    <recommendedName>
        <fullName evidence="1">Acyl carrier protein</fullName>
        <shortName evidence="1">ACP</shortName>
    </recommendedName>
</protein>
<sequence length="78" mass="8699">MSTIEERVKKIVAEQLGVKEEEVTNSASFVEDLGADSLDTVELVMALEEEFETEIPDEQAEKITTVQEAIDYINAHAQ</sequence>
<comment type="function">
    <text evidence="1">Carrier of the growing fatty acid chain in fatty acid biosynthesis.</text>
</comment>
<comment type="pathway">
    <text evidence="1">Lipid metabolism; fatty acid biosynthesis.</text>
</comment>
<comment type="subcellular location">
    <subcellularLocation>
        <location evidence="1">Cytoplasm</location>
    </subcellularLocation>
</comment>
<comment type="PTM">
    <text evidence="1">4'-phosphopantetheine is transferred from CoA to a specific serine of apo-ACP by AcpS. This modification is essential for activity because fatty acids are bound in thioester linkage to the sulfhydryl of the prosthetic group.</text>
</comment>
<comment type="similarity">
    <text evidence="1">Belongs to the acyl carrier protein (ACP) family.</text>
</comment>
<keyword id="KW-0963">Cytoplasm</keyword>
<keyword id="KW-0275">Fatty acid biosynthesis</keyword>
<keyword id="KW-0276">Fatty acid metabolism</keyword>
<keyword id="KW-0444">Lipid biosynthesis</keyword>
<keyword id="KW-0443">Lipid metabolism</keyword>
<keyword id="KW-0596">Phosphopantetheine</keyword>
<keyword id="KW-0597">Phosphoprotein</keyword>
<keyword id="KW-1185">Reference proteome</keyword>
<proteinExistence type="inferred from homology"/>
<accession>A4VMS0</accession>
<gene>
    <name evidence="1" type="primary">acpP</name>
    <name type="ordered locus">PST_2621</name>
</gene>
<dbReference type="EMBL" id="CP000304">
    <property type="protein sequence ID" value="ABP80271.1"/>
    <property type="molecule type" value="Genomic_DNA"/>
</dbReference>
<dbReference type="RefSeq" id="WP_003283670.1">
    <property type="nucleotide sequence ID" value="NC_009434.1"/>
</dbReference>
<dbReference type="SMR" id="A4VMS0"/>
<dbReference type="GeneID" id="98637546"/>
<dbReference type="KEGG" id="psa:PST_2621"/>
<dbReference type="eggNOG" id="COG0236">
    <property type="taxonomic scope" value="Bacteria"/>
</dbReference>
<dbReference type="HOGENOM" id="CLU_108696_5_1_6"/>
<dbReference type="UniPathway" id="UPA00094"/>
<dbReference type="Proteomes" id="UP000000233">
    <property type="component" value="Chromosome"/>
</dbReference>
<dbReference type="GO" id="GO:0005829">
    <property type="term" value="C:cytosol"/>
    <property type="evidence" value="ECO:0007669"/>
    <property type="project" value="TreeGrafter"/>
</dbReference>
<dbReference type="GO" id="GO:0016020">
    <property type="term" value="C:membrane"/>
    <property type="evidence" value="ECO:0007669"/>
    <property type="project" value="GOC"/>
</dbReference>
<dbReference type="GO" id="GO:0000035">
    <property type="term" value="F:acyl binding"/>
    <property type="evidence" value="ECO:0007669"/>
    <property type="project" value="TreeGrafter"/>
</dbReference>
<dbReference type="GO" id="GO:0000036">
    <property type="term" value="F:acyl carrier activity"/>
    <property type="evidence" value="ECO:0007669"/>
    <property type="project" value="UniProtKB-UniRule"/>
</dbReference>
<dbReference type="GO" id="GO:0009245">
    <property type="term" value="P:lipid A biosynthetic process"/>
    <property type="evidence" value="ECO:0007669"/>
    <property type="project" value="TreeGrafter"/>
</dbReference>
<dbReference type="FunFam" id="1.10.1200.10:FF:000001">
    <property type="entry name" value="Acyl carrier protein"/>
    <property type="match status" value="1"/>
</dbReference>
<dbReference type="Gene3D" id="1.10.1200.10">
    <property type="entry name" value="ACP-like"/>
    <property type="match status" value="1"/>
</dbReference>
<dbReference type="HAMAP" id="MF_01217">
    <property type="entry name" value="Acyl_carrier"/>
    <property type="match status" value="1"/>
</dbReference>
<dbReference type="InterPro" id="IPR003231">
    <property type="entry name" value="ACP"/>
</dbReference>
<dbReference type="InterPro" id="IPR036736">
    <property type="entry name" value="ACP-like_sf"/>
</dbReference>
<dbReference type="InterPro" id="IPR009081">
    <property type="entry name" value="PP-bd_ACP"/>
</dbReference>
<dbReference type="InterPro" id="IPR006162">
    <property type="entry name" value="Ppantetheine_attach_site"/>
</dbReference>
<dbReference type="NCBIfam" id="TIGR00517">
    <property type="entry name" value="acyl_carrier"/>
    <property type="match status" value="1"/>
</dbReference>
<dbReference type="NCBIfam" id="NF002148">
    <property type="entry name" value="PRK00982.1-2"/>
    <property type="match status" value="1"/>
</dbReference>
<dbReference type="NCBIfam" id="NF002149">
    <property type="entry name" value="PRK00982.1-3"/>
    <property type="match status" value="1"/>
</dbReference>
<dbReference type="NCBIfam" id="NF002150">
    <property type="entry name" value="PRK00982.1-4"/>
    <property type="match status" value="1"/>
</dbReference>
<dbReference type="NCBIfam" id="NF002151">
    <property type="entry name" value="PRK00982.1-5"/>
    <property type="match status" value="1"/>
</dbReference>
<dbReference type="PANTHER" id="PTHR20863">
    <property type="entry name" value="ACYL CARRIER PROTEIN"/>
    <property type="match status" value="1"/>
</dbReference>
<dbReference type="PANTHER" id="PTHR20863:SF76">
    <property type="entry name" value="CARRIER DOMAIN-CONTAINING PROTEIN"/>
    <property type="match status" value="1"/>
</dbReference>
<dbReference type="Pfam" id="PF00550">
    <property type="entry name" value="PP-binding"/>
    <property type="match status" value="1"/>
</dbReference>
<dbReference type="SUPFAM" id="SSF47336">
    <property type="entry name" value="ACP-like"/>
    <property type="match status" value="1"/>
</dbReference>
<dbReference type="PROSITE" id="PS50075">
    <property type="entry name" value="CARRIER"/>
    <property type="match status" value="1"/>
</dbReference>
<dbReference type="PROSITE" id="PS00012">
    <property type="entry name" value="PHOSPHOPANTETHEINE"/>
    <property type="match status" value="1"/>
</dbReference>
<organism>
    <name type="scientific">Stutzerimonas stutzeri (strain A1501)</name>
    <name type="common">Pseudomonas stutzeri</name>
    <dbReference type="NCBI Taxonomy" id="379731"/>
    <lineage>
        <taxon>Bacteria</taxon>
        <taxon>Pseudomonadati</taxon>
        <taxon>Pseudomonadota</taxon>
        <taxon>Gammaproteobacteria</taxon>
        <taxon>Pseudomonadales</taxon>
        <taxon>Pseudomonadaceae</taxon>
        <taxon>Stutzerimonas</taxon>
    </lineage>
</organism>
<name>ACP_STUS1</name>
<evidence type="ECO:0000255" key="1">
    <source>
        <dbReference type="HAMAP-Rule" id="MF_01217"/>
    </source>
</evidence>
<evidence type="ECO:0000255" key="2">
    <source>
        <dbReference type="PROSITE-ProRule" id="PRU00258"/>
    </source>
</evidence>
<feature type="chain" id="PRO_1000066664" description="Acyl carrier protein">
    <location>
        <begin position="1"/>
        <end position="78"/>
    </location>
</feature>
<feature type="domain" description="Carrier" evidence="2">
    <location>
        <begin position="2"/>
        <end position="77"/>
    </location>
</feature>
<feature type="modified residue" description="O-(pantetheine 4'-phosphoryl)serine" evidence="2">
    <location>
        <position position="37"/>
    </location>
</feature>